<organism>
    <name type="scientific">Leptospira interrogans serogroup Icterohaemorrhagiae serovar Lai (strain 56601)</name>
    <dbReference type="NCBI Taxonomy" id="189518"/>
    <lineage>
        <taxon>Bacteria</taxon>
        <taxon>Pseudomonadati</taxon>
        <taxon>Spirochaetota</taxon>
        <taxon>Spirochaetia</taxon>
        <taxon>Leptospirales</taxon>
        <taxon>Leptospiraceae</taxon>
        <taxon>Leptospira</taxon>
    </lineage>
</organism>
<accession>Q8F936</accession>
<evidence type="ECO:0000255" key="1">
    <source>
        <dbReference type="HAMAP-Rule" id="MF_00272"/>
    </source>
</evidence>
<evidence type="ECO:0000255" key="2">
    <source>
        <dbReference type="PROSITE-ProRule" id="PRU01066"/>
    </source>
</evidence>
<proteinExistence type="inferred from homology"/>
<reference key="1">
    <citation type="journal article" date="2003" name="Nature">
        <title>Unique physiological and pathogenic features of Leptospira interrogans revealed by whole-genome sequencing.</title>
        <authorList>
            <person name="Ren S.-X."/>
            <person name="Fu G."/>
            <person name="Jiang X.-G."/>
            <person name="Zeng R."/>
            <person name="Miao Y.-G."/>
            <person name="Xu H."/>
            <person name="Zhang Y.-X."/>
            <person name="Xiong H."/>
            <person name="Lu G."/>
            <person name="Lu L.-F."/>
            <person name="Jiang H.-Q."/>
            <person name="Jia J."/>
            <person name="Tu Y.-F."/>
            <person name="Jiang J.-X."/>
            <person name="Gu W.-Y."/>
            <person name="Zhang Y.-Q."/>
            <person name="Cai Z."/>
            <person name="Sheng H.-H."/>
            <person name="Yin H.-F."/>
            <person name="Zhang Y."/>
            <person name="Zhu G.-F."/>
            <person name="Wan M."/>
            <person name="Huang H.-L."/>
            <person name="Qian Z."/>
            <person name="Wang S.-Y."/>
            <person name="Ma W."/>
            <person name="Yao Z.-J."/>
            <person name="Shen Y."/>
            <person name="Qiang B.-Q."/>
            <person name="Xia Q.-C."/>
            <person name="Guo X.-K."/>
            <person name="Danchin A."/>
            <person name="Saint Girons I."/>
            <person name="Somerville R.L."/>
            <person name="Wen Y.-M."/>
            <person name="Shi M.-H."/>
            <person name="Chen Z."/>
            <person name="Xu J.-G."/>
            <person name="Zhao G.-P."/>
        </authorList>
    </citation>
    <scope>NUCLEOTIDE SEQUENCE [LARGE SCALE GENOMIC DNA]</scope>
    <source>
        <strain>56601</strain>
    </source>
</reference>
<feature type="chain" id="PRO_0000166222" description="Glycine cleavage system H protein">
    <location>
        <begin position="1"/>
        <end position="130"/>
    </location>
</feature>
<feature type="domain" description="Lipoyl-binding" evidence="2">
    <location>
        <begin position="25"/>
        <end position="106"/>
    </location>
</feature>
<feature type="modified residue" description="N6-lipoyllysine" evidence="1">
    <location>
        <position position="66"/>
    </location>
</feature>
<protein>
    <recommendedName>
        <fullName evidence="1">Glycine cleavage system H protein</fullName>
    </recommendedName>
</protein>
<gene>
    <name evidence="1" type="primary">gcvH</name>
    <name type="ordered locus">LA_0361</name>
</gene>
<sequence length="130" mass="14118">MAETQAPTGYLFSEKHEWVKVEGDMALIGISDFAQSALGDIVFVDLPKTGKNIKQFETFGTIESVKAAEDLYAPIGGEVIESNSALSKNPGDVNSKPFDSWMIKVKGFSTSELDKLLTPEKYKALVAGLE</sequence>
<keyword id="KW-0450">Lipoyl</keyword>
<keyword id="KW-1185">Reference proteome</keyword>
<name>GCSH_LEPIN</name>
<dbReference type="EMBL" id="AE010300">
    <property type="protein sequence ID" value="AAN47560.1"/>
    <property type="molecule type" value="Genomic_DNA"/>
</dbReference>
<dbReference type="RefSeq" id="NP_710542.1">
    <property type="nucleotide sequence ID" value="NC_004342.2"/>
</dbReference>
<dbReference type="RefSeq" id="WP_000852369.1">
    <property type="nucleotide sequence ID" value="NC_004342.2"/>
</dbReference>
<dbReference type="SMR" id="Q8F936"/>
<dbReference type="FunCoup" id="Q8F936">
    <property type="interactions" value="472"/>
</dbReference>
<dbReference type="STRING" id="189518.LA_0361"/>
<dbReference type="PaxDb" id="189518-LA_0361"/>
<dbReference type="EnsemblBacteria" id="AAN47560">
    <property type="protein sequence ID" value="AAN47560"/>
    <property type="gene ID" value="LA_0361"/>
</dbReference>
<dbReference type="GeneID" id="61143665"/>
<dbReference type="KEGG" id="lil:LA_0361"/>
<dbReference type="PATRIC" id="fig|189518.3.peg.366"/>
<dbReference type="HOGENOM" id="CLU_097408_2_2_12"/>
<dbReference type="InParanoid" id="Q8F936"/>
<dbReference type="OrthoDB" id="9796712at2"/>
<dbReference type="Proteomes" id="UP000001408">
    <property type="component" value="Chromosome I"/>
</dbReference>
<dbReference type="GO" id="GO:0005829">
    <property type="term" value="C:cytosol"/>
    <property type="evidence" value="ECO:0000318"/>
    <property type="project" value="GO_Central"/>
</dbReference>
<dbReference type="GO" id="GO:0005960">
    <property type="term" value="C:glycine cleavage complex"/>
    <property type="evidence" value="ECO:0007669"/>
    <property type="project" value="InterPro"/>
</dbReference>
<dbReference type="GO" id="GO:0019464">
    <property type="term" value="P:glycine decarboxylation via glycine cleavage system"/>
    <property type="evidence" value="ECO:0007669"/>
    <property type="project" value="UniProtKB-UniRule"/>
</dbReference>
<dbReference type="CDD" id="cd06848">
    <property type="entry name" value="GCS_H"/>
    <property type="match status" value="1"/>
</dbReference>
<dbReference type="Gene3D" id="2.40.50.100">
    <property type="match status" value="1"/>
</dbReference>
<dbReference type="HAMAP" id="MF_00272">
    <property type="entry name" value="GcvH"/>
    <property type="match status" value="1"/>
</dbReference>
<dbReference type="InterPro" id="IPR003016">
    <property type="entry name" value="2-oxoA_DH_lipoyl-BS"/>
</dbReference>
<dbReference type="InterPro" id="IPR000089">
    <property type="entry name" value="Biotin_lipoyl"/>
</dbReference>
<dbReference type="InterPro" id="IPR002930">
    <property type="entry name" value="GCV_H"/>
</dbReference>
<dbReference type="InterPro" id="IPR033753">
    <property type="entry name" value="GCV_H/Fam206"/>
</dbReference>
<dbReference type="InterPro" id="IPR017453">
    <property type="entry name" value="GCV_H_sub"/>
</dbReference>
<dbReference type="InterPro" id="IPR011053">
    <property type="entry name" value="Single_hybrid_motif"/>
</dbReference>
<dbReference type="NCBIfam" id="TIGR00527">
    <property type="entry name" value="gcvH"/>
    <property type="match status" value="1"/>
</dbReference>
<dbReference type="NCBIfam" id="NF002270">
    <property type="entry name" value="PRK01202.1"/>
    <property type="match status" value="1"/>
</dbReference>
<dbReference type="PANTHER" id="PTHR11715">
    <property type="entry name" value="GLYCINE CLEAVAGE SYSTEM H PROTEIN"/>
    <property type="match status" value="1"/>
</dbReference>
<dbReference type="PANTHER" id="PTHR11715:SF3">
    <property type="entry name" value="GLYCINE CLEAVAGE SYSTEM H PROTEIN-RELATED"/>
    <property type="match status" value="1"/>
</dbReference>
<dbReference type="Pfam" id="PF01597">
    <property type="entry name" value="GCV_H"/>
    <property type="match status" value="1"/>
</dbReference>
<dbReference type="SUPFAM" id="SSF51230">
    <property type="entry name" value="Single hybrid motif"/>
    <property type="match status" value="1"/>
</dbReference>
<dbReference type="PROSITE" id="PS50968">
    <property type="entry name" value="BIOTINYL_LIPOYL"/>
    <property type="match status" value="1"/>
</dbReference>
<dbReference type="PROSITE" id="PS00189">
    <property type="entry name" value="LIPOYL"/>
    <property type="match status" value="1"/>
</dbReference>
<comment type="function">
    <text evidence="1">The glycine cleavage system catalyzes the degradation of glycine. The H protein shuttles the methylamine group of glycine from the P protein to the T protein.</text>
</comment>
<comment type="cofactor">
    <cofactor evidence="1">
        <name>(R)-lipoate</name>
        <dbReference type="ChEBI" id="CHEBI:83088"/>
    </cofactor>
    <text evidence="1">Binds 1 lipoyl cofactor covalently.</text>
</comment>
<comment type="subunit">
    <text evidence="1">The glycine cleavage system is composed of four proteins: P, T, L and H.</text>
</comment>
<comment type="similarity">
    <text evidence="1">Belongs to the GcvH family.</text>
</comment>